<accession>A3Q4F8</accession>
<sequence length="308" mass="32880">MFADSAVACVISALRAVGVDSPLMSELVPRLLFVHAHPDDETLTTGGTIAHYVRRGADVRVVTCTLGEEGEVIGEQYAQLAVDHADQLGGYRIAELTAALAALGVDAPHFLGGPGHWRDSGMADTPARHQPRFVDADMAEAAGLLAAILDDFRPHVVVTYDPDGGYGHPDHVQTHRVTTAAVERAQWQVPKFYWTVMSKSGMGDAFAVARDVPEEWLQVSVDDVPFLYTDDRIDAVVDVSDSIEAKVAAMRAHATQISVAPNGQSCALSNNIAMPIPGVEHYVLVSGAPGPRDARGWETDLLAGVNLA</sequence>
<protein>
    <recommendedName>
        <fullName evidence="1">1D-myo-inositol 2-acetamido-2-deoxy-alpha-D-glucopyranoside deacetylase</fullName>
        <shortName evidence="1">GlcNAc-Ins deacetylase</shortName>
        <ecNumber evidence="1">3.5.1.103</ecNumber>
    </recommendedName>
    <alternativeName>
        <fullName>N-acetyl-1-D-myo-inositol 2-amino-2-deoxy-alpha-D-glucopyranoside deacetylase</fullName>
    </alternativeName>
</protein>
<evidence type="ECO:0000255" key="1">
    <source>
        <dbReference type="HAMAP-Rule" id="MF_01696"/>
    </source>
</evidence>
<feature type="chain" id="PRO_0000400202" description="1D-myo-inositol 2-acetamido-2-deoxy-alpha-D-glucopyranoside deacetylase">
    <location>
        <begin position="1"/>
        <end position="308"/>
    </location>
</feature>
<feature type="binding site" evidence="1">
    <location>
        <position position="37"/>
    </location>
    <ligand>
        <name>Zn(2+)</name>
        <dbReference type="ChEBI" id="CHEBI:29105"/>
    </ligand>
</feature>
<feature type="binding site" evidence="1">
    <location>
        <position position="40"/>
    </location>
    <ligand>
        <name>Zn(2+)</name>
        <dbReference type="ChEBI" id="CHEBI:29105"/>
    </ligand>
</feature>
<feature type="binding site" evidence="1">
    <location>
        <position position="171"/>
    </location>
    <ligand>
        <name>Zn(2+)</name>
        <dbReference type="ChEBI" id="CHEBI:29105"/>
    </ligand>
</feature>
<comment type="function">
    <text evidence="1">Catalyzes the deacetylation of 1D-myo-inositol 2-acetamido-2-deoxy-alpha-D-glucopyranoside (GlcNAc-Ins) in the mycothiol biosynthesis pathway.</text>
</comment>
<comment type="catalytic activity">
    <reaction evidence="1">
        <text>1D-myo-inositol 2-acetamido-2-deoxy-alpha-D-glucopyranoside + H2O = 1D-myo-inositol 2-amino-2-deoxy-alpha-D-glucopyranoside + acetate</text>
        <dbReference type="Rhea" id="RHEA:26180"/>
        <dbReference type="ChEBI" id="CHEBI:15377"/>
        <dbReference type="ChEBI" id="CHEBI:30089"/>
        <dbReference type="ChEBI" id="CHEBI:52442"/>
        <dbReference type="ChEBI" id="CHEBI:58886"/>
        <dbReference type="EC" id="3.5.1.103"/>
    </reaction>
</comment>
<comment type="cofactor">
    <cofactor evidence="1">
        <name>Zn(2+)</name>
        <dbReference type="ChEBI" id="CHEBI:29105"/>
    </cofactor>
    <text evidence="1">Binds 1 zinc ion per subunit.</text>
</comment>
<comment type="similarity">
    <text evidence="1">Belongs to the MshB deacetylase family.</text>
</comment>
<gene>
    <name evidence="1" type="primary">mshB</name>
    <name type="ordered locus">Mjls_4264</name>
</gene>
<keyword id="KW-0378">Hydrolase</keyword>
<keyword id="KW-0479">Metal-binding</keyword>
<keyword id="KW-0862">Zinc</keyword>
<organism>
    <name type="scientific">Mycobacterium sp. (strain JLS)</name>
    <dbReference type="NCBI Taxonomy" id="164757"/>
    <lineage>
        <taxon>Bacteria</taxon>
        <taxon>Bacillati</taxon>
        <taxon>Actinomycetota</taxon>
        <taxon>Actinomycetes</taxon>
        <taxon>Mycobacteriales</taxon>
        <taxon>Mycobacteriaceae</taxon>
        <taxon>Mycobacterium</taxon>
    </lineage>
</organism>
<reference key="1">
    <citation type="submission" date="2007-02" db="EMBL/GenBank/DDBJ databases">
        <title>Complete sequence of Mycobacterium sp. JLS.</title>
        <authorList>
            <consortium name="US DOE Joint Genome Institute"/>
            <person name="Copeland A."/>
            <person name="Lucas S."/>
            <person name="Lapidus A."/>
            <person name="Barry K."/>
            <person name="Detter J.C."/>
            <person name="Glavina del Rio T."/>
            <person name="Hammon N."/>
            <person name="Israni S."/>
            <person name="Dalin E."/>
            <person name="Tice H."/>
            <person name="Pitluck S."/>
            <person name="Chain P."/>
            <person name="Malfatti S."/>
            <person name="Shin M."/>
            <person name="Vergez L."/>
            <person name="Schmutz J."/>
            <person name="Larimer F."/>
            <person name="Land M."/>
            <person name="Hauser L."/>
            <person name="Kyrpides N."/>
            <person name="Mikhailova N."/>
            <person name="Miller C.D."/>
            <person name="Anderson A.J."/>
            <person name="Sims R.C."/>
            <person name="Richardson P."/>
        </authorList>
    </citation>
    <scope>NUCLEOTIDE SEQUENCE [LARGE SCALE GENOMIC DNA]</scope>
    <source>
        <strain>JLS</strain>
    </source>
</reference>
<proteinExistence type="inferred from homology"/>
<dbReference type="EC" id="3.5.1.103" evidence="1"/>
<dbReference type="EMBL" id="CP000580">
    <property type="protein sequence ID" value="ABO00036.1"/>
    <property type="molecule type" value="Genomic_DNA"/>
</dbReference>
<dbReference type="SMR" id="A3Q4F8"/>
<dbReference type="KEGG" id="mjl:Mjls_4264"/>
<dbReference type="HOGENOM" id="CLU_049311_2_1_11"/>
<dbReference type="BioCyc" id="MSP164757:G1G8C-4305-MONOMER"/>
<dbReference type="GO" id="GO:0035595">
    <property type="term" value="F:N-acetylglucosaminylinositol deacetylase activity"/>
    <property type="evidence" value="ECO:0007669"/>
    <property type="project" value="UniProtKB-EC"/>
</dbReference>
<dbReference type="GO" id="GO:0008270">
    <property type="term" value="F:zinc ion binding"/>
    <property type="evidence" value="ECO:0007669"/>
    <property type="project" value="UniProtKB-UniRule"/>
</dbReference>
<dbReference type="GO" id="GO:0010125">
    <property type="term" value="P:mycothiol biosynthetic process"/>
    <property type="evidence" value="ECO:0007669"/>
    <property type="project" value="UniProtKB-UniRule"/>
</dbReference>
<dbReference type="Gene3D" id="3.40.50.10320">
    <property type="entry name" value="LmbE-like"/>
    <property type="match status" value="1"/>
</dbReference>
<dbReference type="HAMAP" id="MF_01696">
    <property type="entry name" value="MshB"/>
    <property type="match status" value="1"/>
</dbReference>
<dbReference type="InterPro" id="IPR003737">
    <property type="entry name" value="GlcNAc_PI_deacetylase-related"/>
</dbReference>
<dbReference type="InterPro" id="IPR024078">
    <property type="entry name" value="LmbE-like_dom_sf"/>
</dbReference>
<dbReference type="InterPro" id="IPR017810">
    <property type="entry name" value="Mycothiol_biosynthesis_MshB"/>
</dbReference>
<dbReference type="NCBIfam" id="TIGR03445">
    <property type="entry name" value="mycothiol_MshB"/>
    <property type="match status" value="1"/>
</dbReference>
<dbReference type="PANTHER" id="PTHR12993:SF26">
    <property type="entry name" value="1D-MYO-INOSITOL 2-ACETAMIDO-2-DEOXY-ALPHA-D-GLUCOPYRANOSIDE DEACETYLASE"/>
    <property type="match status" value="1"/>
</dbReference>
<dbReference type="PANTHER" id="PTHR12993">
    <property type="entry name" value="N-ACETYLGLUCOSAMINYL-PHOSPHATIDYLINOSITOL DE-N-ACETYLASE-RELATED"/>
    <property type="match status" value="1"/>
</dbReference>
<dbReference type="Pfam" id="PF02585">
    <property type="entry name" value="PIG-L"/>
    <property type="match status" value="1"/>
</dbReference>
<dbReference type="SUPFAM" id="SSF102588">
    <property type="entry name" value="LmbE-like"/>
    <property type="match status" value="1"/>
</dbReference>
<name>MSHB_MYCSJ</name>